<sequence length="186" mass="20951">MSLNTQIPEVLWAQRSNKDDAEKNVIYLTVLIPDAVDPKINLTPEKLVIDSKSGANAHYAVQIDFFKDIDVEKSKYSVTGRYIFFVLYKKELQEEFWPRLTKEKLRLHWLRTDFDRWVDEDEQEAQPEVSPFGAGGMPDLSALGGMGGMDFSQFGNLGGAGAGEDASDSEPELEEEEEVGSNEKKE</sequence>
<dbReference type="EMBL" id="L41166">
    <property type="protein sequence ID" value="AAA64891.1"/>
    <property type="molecule type" value="mRNA"/>
</dbReference>
<dbReference type="EMBL" id="CU329670">
    <property type="protein sequence ID" value="CAB16411.1"/>
    <property type="molecule type" value="Genomic_DNA"/>
</dbReference>
<dbReference type="PIR" id="T39220">
    <property type="entry name" value="T39220"/>
</dbReference>
<dbReference type="RefSeq" id="NP_594586.1">
    <property type="nucleotide sequence ID" value="NM_001020015.2"/>
</dbReference>
<dbReference type="SMR" id="Q11118"/>
<dbReference type="BioGRID" id="278933">
    <property type="interactions" value="20"/>
</dbReference>
<dbReference type="FunCoup" id="Q11118">
    <property type="interactions" value="900"/>
</dbReference>
<dbReference type="STRING" id="284812.Q11118"/>
<dbReference type="iPTMnet" id="Q11118"/>
<dbReference type="PaxDb" id="4896-SPAC9E9.13.1"/>
<dbReference type="EnsemblFungi" id="SPAC9E9.13.1">
    <property type="protein sequence ID" value="SPAC9E9.13.1:pep"/>
    <property type="gene ID" value="SPAC9E9.13"/>
</dbReference>
<dbReference type="GeneID" id="2542472"/>
<dbReference type="KEGG" id="spo:2542472"/>
<dbReference type="PomBase" id="SPAC9E9.13">
    <property type="gene designation" value="wos2"/>
</dbReference>
<dbReference type="VEuPathDB" id="FungiDB:SPAC9E9.13"/>
<dbReference type="eggNOG" id="KOG3158">
    <property type="taxonomic scope" value="Eukaryota"/>
</dbReference>
<dbReference type="HOGENOM" id="CLU_078883_0_1_1"/>
<dbReference type="InParanoid" id="Q11118"/>
<dbReference type="OMA" id="EEGPYWP"/>
<dbReference type="PhylomeDB" id="Q11118"/>
<dbReference type="Reactome" id="R-SPO-2162123">
    <property type="pathway name" value="Synthesis of Prostaglandins (PG) and Thromboxanes (TX)"/>
</dbReference>
<dbReference type="Reactome" id="R-SPO-3371511">
    <property type="pathway name" value="HSF1 activation"/>
</dbReference>
<dbReference type="PRO" id="PR:Q11118"/>
<dbReference type="Proteomes" id="UP000002485">
    <property type="component" value="Chromosome I"/>
</dbReference>
<dbReference type="GO" id="GO:0005737">
    <property type="term" value="C:cytoplasm"/>
    <property type="evidence" value="ECO:0000314"/>
    <property type="project" value="PomBase"/>
</dbReference>
<dbReference type="GO" id="GO:0005829">
    <property type="term" value="C:cytosol"/>
    <property type="evidence" value="ECO:0007005"/>
    <property type="project" value="PomBase"/>
</dbReference>
<dbReference type="GO" id="GO:0005634">
    <property type="term" value="C:nucleus"/>
    <property type="evidence" value="ECO:0000314"/>
    <property type="project" value="PomBase"/>
</dbReference>
<dbReference type="GO" id="GO:0051879">
    <property type="term" value="F:Hsp90 protein binding"/>
    <property type="evidence" value="ECO:0000318"/>
    <property type="project" value="GO_Central"/>
</dbReference>
<dbReference type="GO" id="GO:0051087">
    <property type="term" value="F:protein-folding chaperone binding"/>
    <property type="evidence" value="ECO:0000318"/>
    <property type="project" value="GO_Central"/>
</dbReference>
<dbReference type="GO" id="GO:0051131">
    <property type="term" value="P:chaperone-mediated protein complex assembly"/>
    <property type="evidence" value="ECO:0000318"/>
    <property type="project" value="GO_Central"/>
</dbReference>
<dbReference type="GO" id="GO:0006457">
    <property type="term" value="P:protein folding"/>
    <property type="evidence" value="ECO:0000318"/>
    <property type="project" value="GO_Central"/>
</dbReference>
<dbReference type="CDD" id="cd06465">
    <property type="entry name" value="p23_hB-ind1_like"/>
    <property type="match status" value="1"/>
</dbReference>
<dbReference type="FunFam" id="2.60.40.790:FF:000013">
    <property type="entry name" value="Very-long-chain (3R)-3-hydroxyacyl-CoA dehydratase"/>
    <property type="match status" value="1"/>
</dbReference>
<dbReference type="Gene3D" id="2.60.40.790">
    <property type="match status" value="1"/>
</dbReference>
<dbReference type="InterPro" id="IPR007052">
    <property type="entry name" value="CS_dom"/>
</dbReference>
<dbReference type="InterPro" id="IPR008978">
    <property type="entry name" value="HSP20-like_chaperone"/>
</dbReference>
<dbReference type="InterPro" id="IPR045250">
    <property type="entry name" value="p23-like"/>
</dbReference>
<dbReference type="PANTHER" id="PTHR22932:SF1">
    <property type="entry name" value="CO-CHAPERONE PROTEIN DAF-41"/>
    <property type="match status" value="1"/>
</dbReference>
<dbReference type="PANTHER" id="PTHR22932">
    <property type="entry name" value="TELOMERASE-BINDING PROTEIN P23 HSP90 CO-CHAPERONE"/>
    <property type="match status" value="1"/>
</dbReference>
<dbReference type="Pfam" id="PF04969">
    <property type="entry name" value="CS"/>
    <property type="match status" value="1"/>
</dbReference>
<dbReference type="SUPFAM" id="SSF49764">
    <property type="entry name" value="HSP20-like chaperones"/>
    <property type="match status" value="1"/>
</dbReference>
<dbReference type="PROSITE" id="PS51203">
    <property type="entry name" value="CS"/>
    <property type="match status" value="1"/>
</dbReference>
<reference key="1">
    <citation type="submission" date="1995-04" db="EMBL/GenBank/DDBJ databases">
        <title>The identification of p21wos2, a novel cell cycle regulatory protein which closely interacts with p34cdc2 in the control of the M/G1 transition.</title>
        <authorList>
            <person name="Munoz M."/>
            <person name="Bejarano E.R."/>
            <person name="Jimenez J."/>
        </authorList>
    </citation>
    <scope>NUCLEOTIDE SEQUENCE [MRNA]</scope>
    <source>
        <strain>972 / ATCC 24843</strain>
    </source>
</reference>
<reference key="2">
    <citation type="journal article" date="2002" name="Nature">
        <title>The genome sequence of Schizosaccharomyces pombe.</title>
        <authorList>
            <person name="Wood V."/>
            <person name="Gwilliam R."/>
            <person name="Rajandream M.A."/>
            <person name="Lyne M.H."/>
            <person name="Lyne R."/>
            <person name="Stewart A."/>
            <person name="Sgouros J.G."/>
            <person name="Peat N."/>
            <person name="Hayles J."/>
            <person name="Baker S.G."/>
            <person name="Basham D."/>
            <person name="Bowman S."/>
            <person name="Brooks K."/>
            <person name="Brown D."/>
            <person name="Brown S."/>
            <person name="Chillingworth T."/>
            <person name="Churcher C.M."/>
            <person name="Collins M."/>
            <person name="Connor R."/>
            <person name="Cronin A."/>
            <person name="Davis P."/>
            <person name="Feltwell T."/>
            <person name="Fraser A."/>
            <person name="Gentles S."/>
            <person name="Goble A."/>
            <person name="Hamlin N."/>
            <person name="Harris D.E."/>
            <person name="Hidalgo J."/>
            <person name="Hodgson G."/>
            <person name="Holroyd S."/>
            <person name="Hornsby T."/>
            <person name="Howarth S."/>
            <person name="Huckle E.J."/>
            <person name="Hunt S."/>
            <person name="Jagels K."/>
            <person name="James K.D."/>
            <person name="Jones L."/>
            <person name="Jones M."/>
            <person name="Leather S."/>
            <person name="McDonald S."/>
            <person name="McLean J."/>
            <person name="Mooney P."/>
            <person name="Moule S."/>
            <person name="Mungall K.L."/>
            <person name="Murphy L.D."/>
            <person name="Niblett D."/>
            <person name="Odell C."/>
            <person name="Oliver K."/>
            <person name="O'Neil S."/>
            <person name="Pearson D."/>
            <person name="Quail M.A."/>
            <person name="Rabbinowitsch E."/>
            <person name="Rutherford K.M."/>
            <person name="Rutter S."/>
            <person name="Saunders D."/>
            <person name="Seeger K."/>
            <person name="Sharp S."/>
            <person name="Skelton J."/>
            <person name="Simmonds M.N."/>
            <person name="Squares R."/>
            <person name="Squares S."/>
            <person name="Stevens K."/>
            <person name="Taylor K."/>
            <person name="Taylor R.G."/>
            <person name="Tivey A."/>
            <person name="Walsh S.V."/>
            <person name="Warren T."/>
            <person name="Whitehead S."/>
            <person name="Woodward J.R."/>
            <person name="Volckaert G."/>
            <person name="Aert R."/>
            <person name="Robben J."/>
            <person name="Grymonprez B."/>
            <person name="Weltjens I."/>
            <person name="Vanstreels E."/>
            <person name="Rieger M."/>
            <person name="Schaefer M."/>
            <person name="Mueller-Auer S."/>
            <person name="Gabel C."/>
            <person name="Fuchs M."/>
            <person name="Duesterhoeft A."/>
            <person name="Fritzc C."/>
            <person name="Holzer E."/>
            <person name="Moestl D."/>
            <person name="Hilbert H."/>
            <person name="Borzym K."/>
            <person name="Langer I."/>
            <person name="Beck A."/>
            <person name="Lehrach H."/>
            <person name="Reinhardt R."/>
            <person name="Pohl T.M."/>
            <person name="Eger P."/>
            <person name="Zimmermann W."/>
            <person name="Wedler H."/>
            <person name="Wambutt R."/>
            <person name="Purnelle B."/>
            <person name="Goffeau A."/>
            <person name="Cadieu E."/>
            <person name="Dreano S."/>
            <person name="Gloux S."/>
            <person name="Lelaure V."/>
            <person name="Mottier S."/>
            <person name="Galibert F."/>
            <person name="Aves S.J."/>
            <person name="Xiang Z."/>
            <person name="Hunt C."/>
            <person name="Moore K."/>
            <person name="Hurst S.M."/>
            <person name="Lucas M."/>
            <person name="Rochet M."/>
            <person name="Gaillardin C."/>
            <person name="Tallada V.A."/>
            <person name="Garzon A."/>
            <person name="Thode G."/>
            <person name="Daga R.R."/>
            <person name="Cruzado L."/>
            <person name="Jimenez J."/>
            <person name="Sanchez M."/>
            <person name="del Rey F."/>
            <person name="Benito J."/>
            <person name="Dominguez A."/>
            <person name="Revuelta J.L."/>
            <person name="Moreno S."/>
            <person name="Armstrong J."/>
            <person name="Forsburg S.L."/>
            <person name="Cerutti L."/>
            <person name="Lowe T."/>
            <person name="McCombie W.R."/>
            <person name="Paulsen I."/>
            <person name="Potashkin J."/>
            <person name="Shpakovski G.V."/>
            <person name="Ussery D."/>
            <person name="Barrell B.G."/>
            <person name="Nurse P."/>
        </authorList>
    </citation>
    <scope>NUCLEOTIDE SEQUENCE [LARGE SCALE GENOMIC DNA]</scope>
    <source>
        <strain>972 / ATCC 24843</strain>
    </source>
</reference>
<evidence type="ECO:0000255" key="1">
    <source>
        <dbReference type="PROSITE-ProRule" id="PRU00547"/>
    </source>
</evidence>
<evidence type="ECO:0000256" key="2">
    <source>
        <dbReference type="SAM" id="MobiDB-lite"/>
    </source>
</evidence>
<evidence type="ECO:0000305" key="3"/>
<name>WOS2_SCHPO</name>
<organism>
    <name type="scientific">Schizosaccharomyces pombe (strain 972 / ATCC 24843)</name>
    <name type="common">Fission yeast</name>
    <dbReference type="NCBI Taxonomy" id="284812"/>
    <lineage>
        <taxon>Eukaryota</taxon>
        <taxon>Fungi</taxon>
        <taxon>Dikarya</taxon>
        <taxon>Ascomycota</taxon>
        <taxon>Taphrinomycotina</taxon>
        <taxon>Schizosaccharomycetes</taxon>
        <taxon>Schizosaccharomycetales</taxon>
        <taxon>Schizosaccharomycetaceae</taxon>
        <taxon>Schizosaccharomyces</taxon>
    </lineage>
</organism>
<accession>Q11118</accession>
<proteinExistence type="evidence at transcript level"/>
<keyword id="KW-0131">Cell cycle</keyword>
<keyword id="KW-1185">Reference proteome</keyword>
<comment type="function">
    <text>Cell cycle regulatory protein that interacts with cdc2 in the control of the M-G1 transition.</text>
</comment>
<comment type="similarity">
    <text evidence="3">Belongs to the p23/wos2 family.</text>
</comment>
<feature type="chain" id="PRO_0000218958" description="Protein wos2">
    <location>
        <begin position="1"/>
        <end position="186"/>
    </location>
</feature>
<feature type="domain" description="CS" evidence="1">
    <location>
        <begin position="5"/>
        <end position="101"/>
    </location>
</feature>
<feature type="region of interest" description="Disordered" evidence="2">
    <location>
        <begin position="121"/>
        <end position="186"/>
    </location>
</feature>
<feature type="compositionally biased region" description="Acidic residues" evidence="2">
    <location>
        <begin position="165"/>
        <end position="180"/>
    </location>
</feature>
<protein>
    <recommendedName>
        <fullName>Protein wos2</fullName>
    </recommendedName>
    <alternativeName>
        <fullName>p21</fullName>
    </alternativeName>
</protein>
<gene>
    <name type="primary">wos2</name>
    <name type="ORF">SPAC9E9.13</name>
</gene>